<gene>
    <name type="ordered locus">NGR_a03140</name>
    <name type="ORF">y4jB</name>
</gene>
<keyword id="KW-0614">Plasmid</keyword>
<keyword id="KW-1185">Reference proteome</keyword>
<sequence length="152" mass="16693">MDERNDSARSEAMFEARHEGRYRRVEVITGPVRRRNWTDEEKALMLAESAEPDANISAIARRFGVNRGLLNTWRRAAGQIGPVLGEPALEQPAFVPIRIADDQNEHQADEAGIAEGAAGRIEIELGGGRMIVTGNVSPDLAHAVVMALRGRR</sequence>
<organism>
    <name type="scientific">Sinorhizobium fredii (strain NBRC 101917 / NGR234)</name>
    <dbReference type="NCBI Taxonomy" id="394"/>
    <lineage>
        <taxon>Bacteria</taxon>
        <taxon>Pseudomonadati</taxon>
        <taxon>Pseudomonadota</taxon>
        <taxon>Alphaproteobacteria</taxon>
        <taxon>Hyphomicrobiales</taxon>
        <taxon>Rhizobiaceae</taxon>
        <taxon>Sinorhizobium/Ensifer group</taxon>
        <taxon>Sinorhizobium</taxon>
    </lineage>
</organism>
<comment type="similarity">
    <text evidence="1">Belongs to the transposase 8 family.</text>
</comment>
<geneLocation type="plasmid">
    <name>sym pNGR234a</name>
</geneLocation>
<feature type="chain" id="PRO_0000200868" description="Uncharacterized protein y4jB">
    <location>
        <begin position="1"/>
        <end position="152"/>
    </location>
</feature>
<reference key="1">
    <citation type="journal article" date="1997" name="Nature">
        <title>Molecular basis of symbiosis between Rhizobium and legumes.</title>
        <authorList>
            <person name="Freiberg C.A."/>
            <person name="Fellay R."/>
            <person name="Bairoch A."/>
            <person name="Broughton W.J."/>
            <person name="Rosenthal A."/>
            <person name="Perret X."/>
        </authorList>
    </citation>
    <scope>NUCLEOTIDE SEQUENCE [LARGE SCALE GENOMIC DNA]</scope>
    <source>
        <strain>NBRC 101917 / NGR234</strain>
    </source>
</reference>
<reference key="2">
    <citation type="journal article" date="2009" name="Appl. Environ. Microbiol.">
        <title>Rhizobium sp. strain NGR234 possesses a remarkable number of secretion systems.</title>
        <authorList>
            <person name="Schmeisser C."/>
            <person name="Liesegang H."/>
            <person name="Krysciak D."/>
            <person name="Bakkou N."/>
            <person name="Le Quere A."/>
            <person name="Wollherr A."/>
            <person name="Heinemeyer I."/>
            <person name="Morgenstern B."/>
            <person name="Pommerening-Roeser A."/>
            <person name="Flores M."/>
            <person name="Palacios R."/>
            <person name="Brenner S."/>
            <person name="Gottschalk G."/>
            <person name="Schmitz R.A."/>
            <person name="Broughton W.J."/>
            <person name="Perret X."/>
            <person name="Strittmatter A.W."/>
            <person name="Streit W.R."/>
        </authorList>
    </citation>
    <scope>NUCLEOTIDE SEQUENCE [LARGE SCALE GENOMIC DNA]</scope>
    <source>
        <strain>NBRC 101917 / NGR234</strain>
    </source>
</reference>
<accession>P55502</accession>
<protein>
    <recommendedName>
        <fullName>Uncharacterized protein y4jB</fullName>
    </recommendedName>
</protein>
<proteinExistence type="inferred from homology"/>
<name>Y4JB_SINFN</name>
<evidence type="ECO:0000305" key="1"/>
<dbReference type="EMBL" id="U00090">
    <property type="protein sequence ID" value="AAB91714.1"/>
    <property type="molecule type" value="Genomic_DNA"/>
</dbReference>
<dbReference type="RefSeq" id="NP_443912.1">
    <property type="nucleotide sequence ID" value="NC_000914.2"/>
</dbReference>
<dbReference type="RefSeq" id="WP_010875334.1">
    <property type="nucleotide sequence ID" value="NC_000914.2"/>
</dbReference>
<dbReference type="KEGG" id="rhi:NGR_a03140"/>
<dbReference type="PATRIC" id="fig|394.7.peg.322"/>
<dbReference type="eggNOG" id="COG2963">
    <property type="taxonomic scope" value="Bacteria"/>
</dbReference>
<dbReference type="HOGENOM" id="CLU_113764_1_2_5"/>
<dbReference type="OrthoDB" id="8080802at2"/>
<dbReference type="Proteomes" id="UP000001054">
    <property type="component" value="Plasmid pNGR234a"/>
</dbReference>
<dbReference type="GO" id="GO:0043565">
    <property type="term" value="F:sequence-specific DNA binding"/>
    <property type="evidence" value="ECO:0007669"/>
    <property type="project" value="InterPro"/>
</dbReference>
<dbReference type="GO" id="GO:0004803">
    <property type="term" value="F:transposase activity"/>
    <property type="evidence" value="ECO:0007669"/>
    <property type="project" value="InterPro"/>
</dbReference>
<dbReference type="GO" id="GO:0006313">
    <property type="term" value="P:DNA transposition"/>
    <property type="evidence" value="ECO:0007669"/>
    <property type="project" value="InterPro"/>
</dbReference>
<dbReference type="InterPro" id="IPR002514">
    <property type="entry name" value="Transposase_8"/>
</dbReference>
<dbReference type="InterPro" id="IPR010921">
    <property type="entry name" value="Trp_repressor/repl_initiator"/>
</dbReference>
<dbReference type="NCBIfam" id="NF047595">
    <property type="entry name" value="IS66_ISRel24_TnpA"/>
    <property type="match status" value="1"/>
</dbReference>
<dbReference type="PANTHER" id="PTHR37936">
    <property type="entry name" value="TRANSPOSASE INSC FOR INSERTION ELEMENT IS2A-RELATED"/>
    <property type="match status" value="1"/>
</dbReference>
<dbReference type="PANTHER" id="PTHR37936:SF3">
    <property type="entry name" value="TRANSPOSASE INSC FOR INSERTION ELEMENT IS2A-RELATED"/>
    <property type="match status" value="1"/>
</dbReference>
<dbReference type="Pfam" id="PF01527">
    <property type="entry name" value="HTH_Tnp_1"/>
    <property type="match status" value="1"/>
</dbReference>
<dbReference type="SUPFAM" id="SSF48295">
    <property type="entry name" value="TrpR-like"/>
    <property type="match status" value="1"/>
</dbReference>